<name>CBPA4_HUMAN</name>
<proteinExistence type="evidence at protein level"/>
<keyword id="KW-0002">3D-structure</keyword>
<keyword id="KW-0025">Alternative splicing</keyword>
<keyword id="KW-0121">Carboxypeptidase</keyword>
<keyword id="KW-1015">Disulfide bond</keyword>
<keyword id="KW-0325">Glycoprotein</keyword>
<keyword id="KW-0378">Hydrolase</keyword>
<keyword id="KW-0479">Metal-binding</keyword>
<keyword id="KW-0482">Metalloprotease</keyword>
<keyword id="KW-0645">Protease</keyword>
<keyword id="KW-1267">Proteomics identification</keyword>
<keyword id="KW-1185">Reference proteome</keyword>
<keyword id="KW-0964">Secreted</keyword>
<keyword id="KW-0732">Signal</keyword>
<keyword id="KW-0862">Zinc</keyword>
<keyword id="KW-0865">Zymogen</keyword>
<feature type="signal peptide" evidence="1">
    <location>
        <begin position="1"/>
        <end position="16"/>
    </location>
</feature>
<feature type="propeptide" id="PRO_0000004357" description="Activation peptide" evidence="1">
    <location>
        <begin position="17"/>
        <end position="113"/>
    </location>
</feature>
<feature type="chain" id="PRO_0000004358" description="Carboxypeptidase A4">
    <location>
        <begin position="114"/>
        <end position="421"/>
    </location>
</feature>
<feature type="domain" description="Peptidase M14" evidence="2">
    <location>
        <begin position="122"/>
        <end position="416"/>
    </location>
</feature>
<feature type="active site" description="Proton donor/acceptor" evidence="2">
    <location>
        <position position="382"/>
    </location>
</feature>
<feature type="binding site" evidence="6 14">
    <location>
        <position position="69"/>
    </location>
    <ligand>
        <name>a protein</name>
        <dbReference type="ChEBI" id="CHEBI:16541"/>
    </ligand>
</feature>
<feature type="binding site" evidence="6 9 14 16">
    <location>
        <position position="71"/>
    </location>
    <ligand>
        <name>a protein</name>
        <dbReference type="ChEBI" id="CHEBI:16541"/>
    </ligand>
</feature>
<feature type="binding site" evidence="9 16">
    <location>
        <position position="119"/>
    </location>
    <ligand>
        <name>a protein</name>
        <dbReference type="ChEBI" id="CHEBI:16541"/>
    </ligand>
</feature>
<feature type="binding site" evidence="9 16">
    <location>
        <position position="123"/>
    </location>
    <ligand>
        <name>a protein</name>
        <dbReference type="ChEBI" id="CHEBI:16541"/>
    </ligand>
</feature>
<feature type="binding site" evidence="9 16">
    <location>
        <position position="124"/>
    </location>
    <ligand>
        <name>a protein</name>
        <dbReference type="ChEBI" id="CHEBI:16541"/>
    </ligand>
</feature>
<feature type="binding site" evidence="9 16">
    <location>
        <position position="125"/>
    </location>
    <ligand>
        <name>a protein</name>
        <dbReference type="ChEBI" id="CHEBI:16541"/>
    </ligand>
</feature>
<feature type="binding site" evidence="6 14">
    <location>
        <position position="127"/>
    </location>
    <ligand>
        <name>a protein</name>
        <dbReference type="ChEBI" id="CHEBI:16541"/>
    </ligand>
</feature>
<feature type="binding site" evidence="6 14">
    <location>
        <position position="163"/>
    </location>
    <ligand>
        <name>a protein</name>
        <dbReference type="ChEBI" id="CHEBI:16541"/>
    </ligand>
</feature>
<feature type="binding site" evidence="2 4 5 6 8 9 12 13 14 15 16">
    <location>
        <position position="181"/>
    </location>
    <ligand>
        <name>Zn(2+)</name>
        <dbReference type="ChEBI" id="CHEBI:29105"/>
        <note>catalytic</note>
    </ligand>
</feature>
<feature type="binding site" evidence="2 4 5 6 8 9 12 13 14 15 16">
    <location>
        <position position="184"/>
    </location>
    <ligand>
        <name>Zn(2+)</name>
        <dbReference type="ChEBI" id="CHEBI:29105"/>
        <note>catalytic</note>
    </ligand>
</feature>
<feature type="binding site" evidence="6 14">
    <location>
        <position position="196"/>
    </location>
    <ligand>
        <name>a protein</name>
        <dbReference type="ChEBI" id="CHEBI:16541"/>
    </ligand>
</feature>
<feature type="binding site" evidence="9 16">
    <location>
        <position position="197"/>
    </location>
    <ligand>
        <name>a protein</name>
        <dbReference type="ChEBI" id="CHEBI:16541"/>
    </ligand>
</feature>
<feature type="binding site" evidence="6 9 14 16">
    <location>
        <position position="248"/>
    </location>
    <ligand>
        <name>a protein</name>
        <dbReference type="ChEBI" id="CHEBI:16541"/>
    </ligand>
</feature>
<feature type="binding site" evidence="9 16">
    <location>
        <position position="270"/>
    </location>
    <ligand>
        <name>a protein</name>
        <dbReference type="ChEBI" id="CHEBI:16541"/>
    </ligand>
</feature>
<feature type="binding site" evidence="2 4 5 6 8 9 12 13 14 15 16">
    <location>
        <position position="308"/>
    </location>
    <ligand>
        <name>Zn(2+)</name>
        <dbReference type="ChEBI" id="CHEBI:29105"/>
        <note>catalytic</note>
    </ligand>
</feature>
<feature type="glycosylation site" description="N-linked (GlcNAc...) asparagine" evidence="4 5 6 12 13 14">
    <location>
        <position position="260"/>
    </location>
</feature>
<feature type="disulfide bond" evidence="4 5 8">
    <location>
        <begin position="250"/>
        <end position="273"/>
    </location>
</feature>
<feature type="splice variant" id="VSP_042894" description="In isoform 2." evidence="10">
    <location>
        <begin position="96"/>
        <end position="128"/>
    </location>
</feature>
<feature type="sequence variant" id="VAR_048594" description="In dbSNP:rs34587586.">
    <original>L</original>
    <variation>F</variation>
    <location>
        <position position="27"/>
    </location>
</feature>
<feature type="sequence variant" id="VAR_020393" description="In dbSNP:rs3735051.">
    <original>P</original>
    <variation>T</variation>
    <location>
        <position position="157"/>
    </location>
</feature>
<feature type="sequence variant" id="VAR_048595" description="In dbSNP:rs3735053.">
    <original>R</original>
    <variation>L</variation>
    <location>
        <position position="183"/>
    </location>
</feature>
<feature type="sequence variant" id="VAR_020394" description="In dbSNP:rs2171492.">
    <original>G</original>
    <variation>C</variation>
    <location>
        <position position="303"/>
    </location>
</feature>
<feature type="sequence conflict" description="In Ref. 1; AAF23230." evidence="11" ref="1">
    <original>Q</original>
    <variation>R</variation>
    <location>
        <position position="18"/>
    </location>
</feature>
<feature type="strand" evidence="18">
    <location>
        <begin position="25"/>
        <end position="29"/>
    </location>
</feature>
<feature type="helix" evidence="18">
    <location>
        <begin position="34"/>
        <end position="43"/>
    </location>
</feature>
<feature type="turn" evidence="18">
    <location>
        <begin position="44"/>
        <end position="47"/>
    </location>
</feature>
<feature type="helix" evidence="18">
    <location>
        <begin position="48"/>
        <end position="50"/>
    </location>
</feature>
<feature type="strand" evidence="18">
    <location>
        <begin position="52"/>
        <end position="55"/>
    </location>
</feature>
<feature type="strand" evidence="18">
    <location>
        <begin position="59"/>
        <end position="62"/>
    </location>
</feature>
<feature type="strand" evidence="18">
    <location>
        <begin position="64"/>
        <end position="68"/>
    </location>
</feature>
<feature type="helix" evidence="18">
    <location>
        <begin position="70"/>
        <end position="72"/>
    </location>
</feature>
<feature type="helix" evidence="18">
    <location>
        <begin position="73"/>
        <end position="82"/>
    </location>
</feature>
<feature type="strand" evidence="18">
    <location>
        <begin position="87"/>
        <end position="92"/>
    </location>
</feature>
<feature type="helix" evidence="18">
    <location>
        <begin position="94"/>
        <end position="115"/>
    </location>
</feature>
<feature type="strand" evidence="18">
    <location>
        <begin position="120"/>
        <end position="122"/>
    </location>
</feature>
<feature type="helix" evidence="17">
    <location>
        <begin position="126"/>
        <end position="139"/>
    </location>
</feature>
<feature type="turn" evidence="17">
    <location>
        <begin position="141"/>
        <end position="143"/>
    </location>
</feature>
<feature type="strand" evidence="17">
    <location>
        <begin position="144"/>
        <end position="151"/>
    </location>
</feature>
<feature type="strand" evidence="17">
    <location>
        <begin position="157"/>
        <end position="163"/>
    </location>
</feature>
<feature type="strand" evidence="17">
    <location>
        <begin position="173"/>
        <end position="178"/>
    </location>
</feature>
<feature type="helix" evidence="17">
    <location>
        <begin position="185"/>
        <end position="201"/>
    </location>
</feature>
<feature type="turn" evidence="17">
    <location>
        <begin position="202"/>
        <end position="204"/>
    </location>
</feature>
<feature type="helix" evidence="17">
    <location>
        <begin position="206"/>
        <end position="214"/>
    </location>
</feature>
<feature type="strand" evidence="17">
    <location>
        <begin position="216"/>
        <end position="221"/>
    </location>
</feature>
<feature type="helix" evidence="17">
    <location>
        <begin position="225"/>
        <end position="233"/>
    </location>
</feature>
<feature type="strand" evidence="17">
    <location>
        <begin position="249"/>
        <end position="251"/>
    </location>
</feature>
<feature type="helix" evidence="17">
    <location>
        <begin position="255"/>
        <end position="257"/>
    </location>
</feature>
<feature type="strand" evidence="17">
    <location>
        <begin position="259"/>
        <end position="262"/>
    </location>
</feature>
<feature type="strand" evidence="17">
    <location>
        <begin position="265"/>
        <end position="270"/>
    </location>
</feature>
<feature type="helix" evidence="17">
    <location>
        <begin position="286"/>
        <end position="298"/>
    </location>
</feature>
<feature type="strand" evidence="17">
    <location>
        <begin position="301"/>
        <end position="308"/>
    </location>
</feature>
<feature type="strand" evidence="17">
    <location>
        <begin position="310"/>
        <end position="317"/>
    </location>
</feature>
<feature type="helix" evidence="17">
    <location>
        <begin position="328"/>
        <end position="343"/>
    </location>
</feature>
<feature type="turn" evidence="17">
    <location>
        <begin position="344"/>
        <end position="346"/>
    </location>
</feature>
<feature type="strand" evidence="17">
    <location>
        <begin position="351"/>
        <end position="354"/>
    </location>
</feature>
<feature type="helix" evidence="17">
    <location>
        <begin position="355"/>
        <end position="358"/>
    </location>
</feature>
<feature type="helix" evidence="17">
    <location>
        <begin position="366"/>
        <end position="372"/>
    </location>
</feature>
<feature type="strand" evidence="17">
    <location>
        <begin position="377"/>
        <end position="382"/>
    </location>
</feature>
<feature type="strand" evidence="17">
    <location>
        <begin position="386"/>
        <end position="389"/>
    </location>
</feature>
<feature type="helix" evidence="19">
    <location>
        <begin position="390"/>
        <end position="392"/>
    </location>
</feature>
<feature type="helix" evidence="17">
    <location>
        <begin position="395"/>
        <end position="397"/>
    </location>
</feature>
<feature type="helix" evidence="17">
    <location>
        <begin position="398"/>
        <end position="417"/>
    </location>
</feature>
<gene>
    <name type="primary">CPA4</name>
    <name type="synonym">CPA3</name>
    <name type="ORF">UNQ694/PRO1339</name>
</gene>
<dbReference type="EC" id="3.4.17.-" evidence="6 7"/>
<dbReference type="EMBL" id="AF095719">
    <property type="protein sequence ID" value="AAF23230.1"/>
    <property type="molecule type" value="mRNA"/>
</dbReference>
<dbReference type="EMBL" id="AY358699">
    <property type="protein sequence ID" value="AAQ89062.1"/>
    <property type="molecule type" value="mRNA"/>
</dbReference>
<dbReference type="EMBL" id="AK298550">
    <property type="protein sequence ID" value="BAH12812.1"/>
    <property type="molecule type" value="mRNA"/>
</dbReference>
<dbReference type="EMBL" id="AC024085">
    <property type="status" value="NOT_ANNOTATED_CDS"/>
    <property type="molecule type" value="Genomic_DNA"/>
</dbReference>
<dbReference type="EMBL" id="BC052289">
    <property type="protein sequence ID" value="AAH52289.1"/>
    <property type="molecule type" value="mRNA"/>
</dbReference>
<dbReference type="CCDS" id="CCDS55163.1">
    <molecule id="Q9UI42-2"/>
</dbReference>
<dbReference type="CCDS" id="CCDS5818.1">
    <molecule id="Q9UI42-1"/>
</dbReference>
<dbReference type="RefSeq" id="NP_001156918.1">
    <molecule id="Q9UI42-2"/>
    <property type="nucleotide sequence ID" value="NM_001163446.2"/>
</dbReference>
<dbReference type="RefSeq" id="NP_057436.2">
    <molecule id="Q9UI42-1"/>
    <property type="nucleotide sequence ID" value="NM_016352.4"/>
</dbReference>
<dbReference type="PDB" id="2BO9">
    <property type="method" value="X-ray"/>
    <property type="resolution" value="1.60 A"/>
    <property type="chains" value="A/C=114-421"/>
</dbReference>
<dbReference type="PDB" id="2BOA">
    <property type="method" value="X-ray"/>
    <property type="resolution" value="2.20 A"/>
    <property type="chains" value="A/B=19-421"/>
</dbReference>
<dbReference type="PDB" id="2PCU">
    <property type="method" value="X-ray"/>
    <property type="resolution" value="1.60 A"/>
    <property type="chains" value="A=116-420"/>
</dbReference>
<dbReference type="PDB" id="4A94">
    <property type="method" value="X-ray"/>
    <property type="resolution" value="1.70 A"/>
    <property type="chains" value="A/B=112-421"/>
</dbReference>
<dbReference type="PDB" id="4BD9">
    <property type="method" value="X-ray"/>
    <property type="resolution" value="2.20 A"/>
    <property type="chains" value="A=112-421"/>
</dbReference>
<dbReference type="PDBsum" id="2BO9"/>
<dbReference type="PDBsum" id="2BOA"/>
<dbReference type="PDBsum" id="2PCU"/>
<dbReference type="PDBsum" id="4A94"/>
<dbReference type="PDBsum" id="4BD9"/>
<dbReference type="SMR" id="Q9UI42"/>
<dbReference type="BioGRID" id="119373">
    <property type="interactions" value="136"/>
</dbReference>
<dbReference type="DIP" id="DIP-60558N"/>
<dbReference type="FunCoup" id="Q9UI42">
    <property type="interactions" value="223"/>
</dbReference>
<dbReference type="IntAct" id="Q9UI42">
    <property type="interactions" value="70"/>
</dbReference>
<dbReference type="MINT" id="Q9UI42"/>
<dbReference type="STRING" id="9606.ENSP00000222482"/>
<dbReference type="BindingDB" id="Q9UI42"/>
<dbReference type="ChEMBL" id="CHEMBL2644"/>
<dbReference type="MEROPS" id="M14.017"/>
<dbReference type="GlyConnect" id="1065">
    <property type="glycosylation" value="1 N-Linked glycan (1 site)"/>
</dbReference>
<dbReference type="GlyCosmos" id="Q9UI42">
    <property type="glycosylation" value="1 site, 1 glycan"/>
</dbReference>
<dbReference type="GlyGen" id="Q9UI42">
    <property type="glycosylation" value="3 sites, 4 N-linked glycans (1 site), 1 O-linked glycan (1 site)"/>
</dbReference>
<dbReference type="iPTMnet" id="Q9UI42"/>
<dbReference type="PhosphoSitePlus" id="Q9UI42"/>
<dbReference type="SwissPalm" id="Q9UI42"/>
<dbReference type="BioMuta" id="CPA4"/>
<dbReference type="DMDM" id="61252703"/>
<dbReference type="jPOST" id="Q9UI42"/>
<dbReference type="MassIVE" id="Q9UI42"/>
<dbReference type="PaxDb" id="9606-ENSP00000222482"/>
<dbReference type="PeptideAtlas" id="Q9UI42"/>
<dbReference type="ProteomicsDB" id="84471">
    <molecule id="Q9UI42-1"/>
</dbReference>
<dbReference type="ProteomicsDB" id="84472">
    <molecule id="Q9UI42-2"/>
</dbReference>
<dbReference type="Pumba" id="Q9UI42"/>
<dbReference type="Antibodypedia" id="17950">
    <property type="antibodies" value="95 antibodies from 26 providers"/>
</dbReference>
<dbReference type="DNASU" id="51200"/>
<dbReference type="Ensembl" id="ENST00000222482.10">
    <molecule id="Q9UI42-1"/>
    <property type="protein sequence ID" value="ENSP00000222482.4"/>
    <property type="gene ID" value="ENSG00000128510.12"/>
</dbReference>
<dbReference type="Ensembl" id="ENST00000445470.6">
    <molecule id="Q9UI42-2"/>
    <property type="protein sequence ID" value="ENSP00000412947.2"/>
    <property type="gene ID" value="ENSG00000128510.12"/>
</dbReference>
<dbReference type="GeneID" id="51200"/>
<dbReference type="KEGG" id="hsa:51200"/>
<dbReference type="MANE-Select" id="ENST00000222482.10">
    <property type="protein sequence ID" value="ENSP00000222482.4"/>
    <property type="RefSeq nucleotide sequence ID" value="NM_016352.4"/>
    <property type="RefSeq protein sequence ID" value="NP_057436.2"/>
</dbReference>
<dbReference type="UCSC" id="uc003vpr.4">
    <molecule id="Q9UI42-1"/>
    <property type="organism name" value="human"/>
</dbReference>
<dbReference type="AGR" id="HGNC:15740"/>
<dbReference type="CTD" id="51200"/>
<dbReference type="DisGeNET" id="51200"/>
<dbReference type="GeneCards" id="CPA4"/>
<dbReference type="HGNC" id="HGNC:15740">
    <property type="gene designation" value="CPA4"/>
</dbReference>
<dbReference type="HPA" id="ENSG00000128510">
    <property type="expression patterns" value="Tissue enhanced (esophagus, skin)"/>
</dbReference>
<dbReference type="MIM" id="607635">
    <property type="type" value="gene"/>
</dbReference>
<dbReference type="neXtProt" id="NX_Q9UI42"/>
<dbReference type="OpenTargets" id="ENSG00000128510"/>
<dbReference type="PharmGKB" id="PA26819"/>
<dbReference type="VEuPathDB" id="HostDB:ENSG00000128510"/>
<dbReference type="eggNOG" id="KOG2650">
    <property type="taxonomic scope" value="Eukaryota"/>
</dbReference>
<dbReference type="GeneTree" id="ENSGT00940000161774"/>
<dbReference type="InParanoid" id="Q9UI42"/>
<dbReference type="OMA" id="DYQKDPA"/>
<dbReference type="OrthoDB" id="3626597at2759"/>
<dbReference type="PAN-GO" id="Q9UI42">
    <property type="GO annotations" value="3 GO annotations based on evolutionary models"/>
</dbReference>
<dbReference type="PhylomeDB" id="Q9UI42"/>
<dbReference type="TreeFam" id="TF317197"/>
<dbReference type="BRENDA" id="3.4.17.1">
    <property type="organism ID" value="2681"/>
</dbReference>
<dbReference type="PathwayCommons" id="Q9UI42"/>
<dbReference type="SignaLink" id="Q9UI42"/>
<dbReference type="BioGRID-ORCS" id="51200">
    <property type="hits" value="13 hits in 1154 CRISPR screens"/>
</dbReference>
<dbReference type="ChiTaRS" id="CPA4">
    <property type="organism name" value="human"/>
</dbReference>
<dbReference type="EvolutionaryTrace" id="Q9UI42"/>
<dbReference type="GeneWiki" id="CPA4_(gene)"/>
<dbReference type="GenomeRNAi" id="51200"/>
<dbReference type="Pharos" id="Q9UI42">
    <property type="development level" value="Tchem"/>
</dbReference>
<dbReference type="PRO" id="PR:Q9UI42"/>
<dbReference type="Proteomes" id="UP000005640">
    <property type="component" value="Chromosome 7"/>
</dbReference>
<dbReference type="RNAct" id="Q9UI42">
    <property type="molecule type" value="protein"/>
</dbReference>
<dbReference type="Bgee" id="ENSG00000128510">
    <property type="expression patterns" value="Expressed in skin of abdomen and 88 other cell types or tissues"/>
</dbReference>
<dbReference type="ExpressionAtlas" id="Q9UI42">
    <property type="expression patterns" value="baseline and differential"/>
</dbReference>
<dbReference type="GO" id="GO:0005615">
    <property type="term" value="C:extracellular space"/>
    <property type="evidence" value="ECO:0000314"/>
    <property type="project" value="UniProtKB"/>
</dbReference>
<dbReference type="GO" id="GO:0004181">
    <property type="term" value="F:metallocarboxypeptidase activity"/>
    <property type="evidence" value="ECO:0000314"/>
    <property type="project" value="UniProtKB"/>
</dbReference>
<dbReference type="GO" id="GO:0008270">
    <property type="term" value="F:zinc ion binding"/>
    <property type="evidence" value="ECO:0007669"/>
    <property type="project" value="InterPro"/>
</dbReference>
<dbReference type="GO" id="GO:0042447">
    <property type="term" value="P:hormone catabolic process"/>
    <property type="evidence" value="ECO:0000314"/>
    <property type="project" value="UniProtKB"/>
</dbReference>
<dbReference type="GO" id="GO:0043171">
    <property type="term" value="P:peptide catabolic process"/>
    <property type="evidence" value="ECO:0000314"/>
    <property type="project" value="UniProtKB"/>
</dbReference>
<dbReference type="GO" id="GO:0006508">
    <property type="term" value="P:proteolysis"/>
    <property type="evidence" value="ECO:0000318"/>
    <property type="project" value="GO_Central"/>
</dbReference>
<dbReference type="CDD" id="cd03870">
    <property type="entry name" value="M14_CPA"/>
    <property type="match status" value="1"/>
</dbReference>
<dbReference type="FunFam" id="3.40.630.10:FF:000132">
    <property type="entry name" value="Carboxypeptidase A1"/>
    <property type="match status" value="1"/>
</dbReference>
<dbReference type="FunFam" id="3.30.70.340:FF:000001">
    <property type="entry name" value="Carboxypeptidase A5"/>
    <property type="match status" value="1"/>
</dbReference>
<dbReference type="Gene3D" id="3.30.70.340">
    <property type="entry name" value="Metallocarboxypeptidase-like"/>
    <property type="match status" value="1"/>
</dbReference>
<dbReference type="Gene3D" id="3.40.630.10">
    <property type="entry name" value="Zn peptidases"/>
    <property type="match status" value="1"/>
</dbReference>
<dbReference type="InterPro" id="IPR034248">
    <property type="entry name" value="CPA_M14_CPD"/>
</dbReference>
<dbReference type="InterPro" id="IPR036990">
    <property type="entry name" value="M14A-like_propep"/>
</dbReference>
<dbReference type="InterPro" id="IPR003146">
    <property type="entry name" value="M14A_act_pep"/>
</dbReference>
<dbReference type="InterPro" id="IPR000834">
    <property type="entry name" value="Peptidase_M14"/>
</dbReference>
<dbReference type="PANTHER" id="PTHR11705:SF136">
    <property type="entry name" value="CARBOXYPEPTIDASE A4"/>
    <property type="match status" value="1"/>
</dbReference>
<dbReference type="PANTHER" id="PTHR11705">
    <property type="entry name" value="PROTEASE FAMILY M14 CARBOXYPEPTIDASE A,B"/>
    <property type="match status" value="1"/>
</dbReference>
<dbReference type="Pfam" id="PF00246">
    <property type="entry name" value="Peptidase_M14"/>
    <property type="match status" value="1"/>
</dbReference>
<dbReference type="Pfam" id="PF02244">
    <property type="entry name" value="Propep_M14"/>
    <property type="match status" value="1"/>
</dbReference>
<dbReference type="PRINTS" id="PR00765">
    <property type="entry name" value="CRBOXYPTASEA"/>
</dbReference>
<dbReference type="SMART" id="SM00631">
    <property type="entry name" value="Zn_pept"/>
    <property type="match status" value="1"/>
</dbReference>
<dbReference type="SUPFAM" id="SSF54897">
    <property type="entry name" value="Protease propeptides/inhibitors"/>
    <property type="match status" value="1"/>
</dbReference>
<dbReference type="SUPFAM" id="SSF53187">
    <property type="entry name" value="Zn-dependent exopeptidases"/>
    <property type="match status" value="1"/>
</dbReference>
<dbReference type="PROSITE" id="PS00132">
    <property type="entry name" value="CARBOXYPEPT_ZN_1"/>
    <property type="match status" value="1"/>
</dbReference>
<dbReference type="PROSITE" id="PS00133">
    <property type="entry name" value="CARBOXYPEPT_ZN_2"/>
    <property type="match status" value="1"/>
</dbReference>
<dbReference type="PROSITE" id="PS52035">
    <property type="entry name" value="PEPTIDASE_M14"/>
    <property type="match status" value="1"/>
</dbReference>
<comment type="function">
    <text evidence="7">Metalloprotease that cleaves hydrophobic C-terminal residues with a preference for -Phe, -Leu, -Ile, -Met, -Tyr and -Val (PubMed:20385563). May function in peptide hormone and/or neuropeptide catabolism (PubMed:20385563).</text>
</comment>
<comment type="cofactor">
    <cofactor evidence="6 8 9">
        <name>Zn(2+)</name>
        <dbReference type="ChEBI" id="CHEBI:29105"/>
    </cofactor>
    <text evidence="6 8 9">Binds 1 zinc ion per subunit.</text>
</comment>
<comment type="activity regulation">
    <text evidence="7 8 9">Inhibited by interaction with the metallocarboxypeptidase inhibitor (MCPI) from N.versicolor that binds to the catalytic zinc ion (PubMed:22294694). Also inhibited by interaction with the S.magnifica carboxypeptidase inhibitor SmCI that penetrates the active site groove and inhibits activity by emulating a C-terminal substrate (PubMed:23746805). Additionally inhibited by a carboxypeptidase inhibitor from H.medicinalis (leech) and R.bursa (tick) (PubMed:20385563).</text>
</comment>
<comment type="biophysicochemical properties">
    <kinetics>
        <KM evidence="7">55.6 uM for 3-(2-furyl)acryloyl-Phe-Phe (at 25 degrees Celsius)</KM>
        <KM evidence="7">19.4 uM for 3-(2-furyl)acryloyl-Phe-Leu (at 25 degrees Celsius)</KM>
        <KM evidence="7">23.3 uM for 3-(2-furyl)acryloyl-Phe-Ile (at 25 degrees Celsius)</KM>
        <KM evidence="7">40 uM for 3-(2-furyl)acryloyl-Phe-Met (at 25 degrees Celsius)</KM>
        <KM evidence="7">57.3 uM for 3-(2-furyl)acryloyl-Phe-Val (at 25 degrees Celsius)</KM>
        <KM evidence="7">61.5 uM for 3-(2-furyl)acryloyl-Phe-Trp (at 25 degrees Celsius)</KM>
        <KM evidence="7">372 uM for 3-(2-furyl)acryloyl-Phe-Ala (at 25 degrees Celsius)</KM>
        <KM evidence="7">0.329 uM for neurotensin (at 37 degrees Celsius)</KM>
        <KM evidence="7">9.23 uM for Met-enkephalin-Arg-Phe (at 37 degrees Celsius)</KM>
        <KM evidence="7">227 uM for angiotensin I (at 37 degrees Celsius)</KM>
        <KM evidence="7">165 uM for Leu-enkephalin (at 37 degrees Celsius)</KM>
        <KM evidence="7">550 uM for Met-enkephalin (at 37 degrees Celsius)</KM>
        <text evidence="7">kcat is 44.3 sec(-1) with 3-(2-furyl)acryloyl-Phe-Phe as substrate (at 25 degrees Celsius) (PubMed:20385563). kcat is 13.4 sec(-1) with 3-(2-furyl)acryloyl-Phe-Leu as substrate (at 25 degrees Celsius) (PubMed:20385563). kcat is 12.4 sec(-1) with 3-(2-furyl)acryloyl-Phe-Ile as substrate (at 25 degrees Celsius) (PubMed:20385563). kcat is 23.9 sec(-1) with 3-(2-furyl)acryloyl-Phe-Met as substrate (at 25 degrees Celsius) (PubMed:20385563). kcat is 19.4 sec(-1) with 3-(2-furyl)acryloyl-Phe-Val as substrate (at 25 degrees Celsius) (PubMed:20385563). kcat is 57.3 sec(-1) with 3-(2-furyl)acryloyl-Phe-Trp as substrate (at 25 degrees Celsius) (PubMed:20385563). kcat is 24.3 sec(-1) with 3-(2-furyl)acryloyl-Phe-Ala as substrate (at 25 degrees Celsius) (PubMed:20385563). kcat is 0.24 sec(-1) with neurotensin as substrate (at 37 degrees Celsius) (PubMed:20385563). kcat is 1.45 sec(-1) with Met-enkephalin-Arg-Phe as substrate (at 37 degrees Celsius) (PubMed:20385563). kcat is 8.23 sec(-1) with angiotensin I as substrate (at 37 degrees Celsius) (PubMed:20385563). kcat is 2.33 sec(-1) with Leu-enkephalin as substrate (at 37 degrees Celsius) (PubMed:20385563). kcat is 3.43 sec(-1) with Met-enkephalin as substrate (at 37 degrees Celsius) (PubMed:20385563).</text>
    </kinetics>
    <phDependence>
        <text evidence="7">Optimum pH is 8.5-9.</text>
    </phDependence>
</comment>
<comment type="subunit">
    <text evidence="4 5 8">Monomer (PubMed:22294694). Interacts with LXN (PubMed:15738388, PubMed:16091843).</text>
</comment>
<comment type="interaction">
    <interactant intactId="EBI-16060275">
        <id>Q9UI42-1</id>
    </interactant>
    <interactant intactId="EBI-16060264">
        <id>P84875</id>
    </interactant>
    <organismsDiffer>true</organismsDiffer>
    <experiments>3</experiments>
</comment>
<comment type="subcellular location">
    <subcellularLocation>
        <location evidence="7">Secreted</location>
    </subcellularLocation>
</comment>
<comment type="alternative products">
    <event type="alternative splicing"/>
    <isoform>
        <id>Q9UI42-1</id>
        <name>1</name>
        <sequence type="displayed"/>
    </isoform>
    <isoform>
        <id>Q9UI42-2</id>
        <name>2</name>
        <sequence type="described" ref="VSP_042894"/>
    </isoform>
</comment>
<comment type="tissue specificity">
    <text>Fetal expression in the adrenal gland, brain, heart, intestine, kidney, liver and lung. Except for fetal brain that shows no imprinting, expression was found preferentially from the maternal allele.</text>
</comment>
<comment type="induction">
    <text evidence="3">Induced by the histone deacetylase inhibitors trichostatin A and sodium butyrate.</text>
</comment>
<comment type="similarity">
    <text evidence="11">Belongs to the peptidase M14 family.</text>
</comment>
<accession>Q9UI42</accession>
<accession>B7Z576</accession>
<accession>Q86UY9</accession>
<protein>
    <recommendedName>
        <fullName>Carboxypeptidase A4</fullName>
        <ecNumber evidence="6 7">3.4.17.-</ecNumber>
    </recommendedName>
    <alternativeName>
        <fullName>Carboxypeptidase A3</fullName>
    </alternativeName>
</protein>
<organism>
    <name type="scientific">Homo sapiens</name>
    <name type="common">Human</name>
    <dbReference type="NCBI Taxonomy" id="9606"/>
    <lineage>
        <taxon>Eukaryota</taxon>
        <taxon>Metazoa</taxon>
        <taxon>Chordata</taxon>
        <taxon>Craniata</taxon>
        <taxon>Vertebrata</taxon>
        <taxon>Euteleostomi</taxon>
        <taxon>Mammalia</taxon>
        <taxon>Eutheria</taxon>
        <taxon>Euarchontoglires</taxon>
        <taxon>Primates</taxon>
        <taxon>Haplorrhini</taxon>
        <taxon>Catarrhini</taxon>
        <taxon>Hominidae</taxon>
        <taxon>Homo</taxon>
    </lineage>
</organism>
<evidence type="ECO:0000255" key="1"/>
<evidence type="ECO:0000255" key="2">
    <source>
        <dbReference type="PROSITE-ProRule" id="PRU01379"/>
    </source>
</evidence>
<evidence type="ECO:0000269" key="3">
    <source>
    </source>
</evidence>
<evidence type="ECO:0000269" key="4">
    <source>
    </source>
</evidence>
<evidence type="ECO:0000269" key="5">
    <source>
    </source>
</evidence>
<evidence type="ECO:0000269" key="6">
    <source>
    </source>
</evidence>
<evidence type="ECO:0000269" key="7">
    <source>
    </source>
</evidence>
<evidence type="ECO:0000269" key="8">
    <source>
    </source>
</evidence>
<evidence type="ECO:0000269" key="9">
    <source>
    </source>
</evidence>
<evidence type="ECO:0000303" key="10">
    <source>
    </source>
</evidence>
<evidence type="ECO:0000305" key="11"/>
<evidence type="ECO:0007744" key="12">
    <source>
        <dbReference type="PDB" id="2BO9"/>
    </source>
</evidence>
<evidence type="ECO:0007744" key="13">
    <source>
        <dbReference type="PDB" id="2BOA"/>
    </source>
</evidence>
<evidence type="ECO:0007744" key="14">
    <source>
        <dbReference type="PDB" id="2PCU"/>
    </source>
</evidence>
<evidence type="ECO:0007744" key="15">
    <source>
        <dbReference type="PDB" id="4A94"/>
    </source>
</evidence>
<evidence type="ECO:0007744" key="16">
    <source>
        <dbReference type="PDB" id="4BD9"/>
    </source>
</evidence>
<evidence type="ECO:0007829" key="17">
    <source>
        <dbReference type="PDB" id="2BO9"/>
    </source>
</evidence>
<evidence type="ECO:0007829" key="18">
    <source>
        <dbReference type="PDB" id="2BOA"/>
    </source>
</evidence>
<evidence type="ECO:0007829" key="19">
    <source>
        <dbReference type="PDB" id="4BD9"/>
    </source>
</evidence>
<reference key="1">
    <citation type="journal article" date="1999" name="Cancer Res.">
        <title>Carboxypeptidase A3 (CPA3): a novel gene highly induced by histone deacetylase inhibitors during differentiation of prostate epithelial cancer cells.</title>
        <authorList>
            <person name="Huang H."/>
            <person name="Reed C.P."/>
            <person name="Zhang J.S."/>
            <person name="Shridhar V."/>
            <person name="Wang L."/>
            <person name="Smith D.I."/>
        </authorList>
    </citation>
    <scope>NUCLEOTIDE SEQUENCE [MRNA] (ISOFORM 1)</scope>
    <scope>INDUCTION</scope>
</reference>
<reference key="2">
    <citation type="journal article" date="2003" name="Genome Res.">
        <title>The secreted protein discovery initiative (SPDI), a large-scale effort to identify novel human secreted and transmembrane proteins: a bioinformatics assessment.</title>
        <authorList>
            <person name="Clark H.F."/>
            <person name="Gurney A.L."/>
            <person name="Abaya E."/>
            <person name="Baker K."/>
            <person name="Baldwin D.T."/>
            <person name="Brush J."/>
            <person name="Chen J."/>
            <person name="Chow B."/>
            <person name="Chui C."/>
            <person name="Crowley C."/>
            <person name="Currell B."/>
            <person name="Deuel B."/>
            <person name="Dowd P."/>
            <person name="Eaton D."/>
            <person name="Foster J.S."/>
            <person name="Grimaldi C."/>
            <person name="Gu Q."/>
            <person name="Hass P.E."/>
            <person name="Heldens S."/>
            <person name="Huang A."/>
            <person name="Kim H.S."/>
            <person name="Klimowski L."/>
            <person name="Jin Y."/>
            <person name="Johnson S."/>
            <person name="Lee J."/>
            <person name="Lewis L."/>
            <person name="Liao D."/>
            <person name="Mark M.R."/>
            <person name="Robbie E."/>
            <person name="Sanchez C."/>
            <person name="Schoenfeld J."/>
            <person name="Seshagiri S."/>
            <person name="Simmons L."/>
            <person name="Singh J."/>
            <person name="Smith V."/>
            <person name="Stinson J."/>
            <person name="Vagts A."/>
            <person name="Vandlen R.L."/>
            <person name="Watanabe C."/>
            <person name="Wieand D."/>
            <person name="Woods K."/>
            <person name="Xie M.-H."/>
            <person name="Yansura D.G."/>
            <person name="Yi S."/>
            <person name="Yu G."/>
            <person name="Yuan J."/>
            <person name="Zhang M."/>
            <person name="Zhang Z."/>
            <person name="Goddard A.D."/>
            <person name="Wood W.I."/>
            <person name="Godowski P.J."/>
            <person name="Gray A.M."/>
        </authorList>
    </citation>
    <scope>NUCLEOTIDE SEQUENCE [LARGE SCALE MRNA] (ISOFORM 1)</scope>
</reference>
<reference key="3">
    <citation type="journal article" date="2004" name="Nat. Genet.">
        <title>Complete sequencing and characterization of 21,243 full-length human cDNAs.</title>
        <authorList>
            <person name="Ota T."/>
            <person name="Suzuki Y."/>
            <person name="Nishikawa T."/>
            <person name="Otsuki T."/>
            <person name="Sugiyama T."/>
            <person name="Irie R."/>
            <person name="Wakamatsu A."/>
            <person name="Hayashi K."/>
            <person name="Sato H."/>
            <person name="Nagai K."/>
            <person name="Kimura K."/>
            <person name="Makita H."/>
            <person name="Sekine M."/>
            <person name="Obayashi M."/>
            <person name="Nishi T."/>
            <person name="Shibahara T."/>
            <person name="Tanaka T."/>
            <person name="Ishii S."/>
            <person name="Yamamoto J."/>
            <person name="Saito K."/>
            <person name="Kawai Y."/>
            <person name="Isono Y."/>
            <person name="Nakamura Y."/>
            <person name="Nagahari K."/>
            <person name="Murakami K."/>
            <person name="Yasuda T."/>
            <person name="Iwayanagi T."/>
            <person name="Wagatsuma M."/>
            <person name="Shiratori A."/>
            <person name="Sudo H."/>
            <person name="Hosoiri T."/>
            <person name="Kaku Y."/>
            <person name="Kodaira H."/>
            <person name="Kondo H."/>
            <person name="Sugawara M."/>
            <person name="Takahashi M."/>
            <person name="Kanda K."/>
            <person name="Yokoi T."/>
            <person name="Furuya T."/>
            <person name="Kikkawa E."/>
            <person name="Omura Y."/>
            <person name="Abe K."/>
            <person name="Kamihara K."/>
            <person name="Katsuta N."/>
            <person name="Sato K."/>
            <person name="Tanikawa M."/>
            <person name="Yamazaki M."/>
            <person name="Ninomiya K."/>
            <person name="Ishibashi T."/>
            <person name="Yamashita H."/>
            <person name="Murakawa K."/>
            <person name="Fujimori K."/>
            <person name="Tanai H."/>
            <person name="Kimata M."/>
            <person name="Watanabe M."/>
            <person name="Hiraoka S."/>
            <person name="Chiba Y."/>
            <person name="Ishida S."/>
            <person name="Ono Y."/>
            <person name="Takiguchi S."/>
            <person name="Watanabe S."/>
            <person name="Yosida M."/>
            <person name="Hotuta T."/>
            <person name="Kusano J."/>
            <person name="Kanehori K."/>
            <person name="Takahashi-Fujii A."/>
            <person name="Hara H."/>
            <person name="Tanase T.-O."/>
            <person name="Nomura Y."/>
            <person name="Togiya S."/>
            <person name="Komai F."/>
            <person name="Hara R."/>
            <person name="Takeuchi K."/>
            <person name="Arita M."/>
            <person name="Imose N."/>
            <person name="Musashino K."/>
            <person name="Yuuki H."/>
            <person name="Oshima A."/>
            <person name="Sasaki N."/>
            <person name="Aotsuka S."/>
            <person name="Yoshikawa Y."/>
            <person name="Matsunawa H."/>
            <person name="Ichihara T."/>
            <person name="Shiohata N."/>
            <person name="Sano S."/>
            <person name="Moriya S."/>
            <person name="Momiyama H."/>
            <person name="Satoh N."/>
            <person name="Takami S."/>
            <person name="Terashima Y."/>
            <person name="Suzuki O."/>
            <person name="Nakagawa S."/>
            <person name="Senoh A."/>
            <person name="Mizoguchi H."/>
            <person name="Goto Y."/>
            <person name="Shimizu F."/>
            <person name="Wakebe H."/>
            <person name="Hishigaki H."/>
            <person name="Watanabe T."/>
            <person name="Sugiyama A."/>
            <person name="Takemoto M."/>
            <person name="Kawakami B."/>
            <person name="Yamazaki M."/>
            <person name="Watanabe K."/>
            <person name="Kumagai A."/>
            <person name="Itakura S."/>
            <person name="Fukuzumi Y."/>
            <person name="Fujimori Y."/>
            <person name="Komiyama M."/>
            <person name="Tashiro H."/>
            <person name="Tanigami A."/>
            <person name="Fujiwara T."/>
            <person name="Ono T."/>
            <person name="Yamada K."/>
            <person name="Fujii Y."/>
            <person name="Ozaki K."/>
            <person name="Hirao M."/>
            <person name="Ohmori Y."/>
            <person name="Kawabata A."/>
            <person name="Hikiji T."/>
            <person name="Kobatake N."/>
            <person name="Inagaki H."/>
            <person name="Ikema Y."/>
            <person name="Okamoto S."/>
            <person name="Okitani R."/>
            <person name="Kawakami T."/>
            <person name="Noguchi S."/>
            <person name="Itoh T."/>
            <person name="Shigeta K."/>
            <person name="Senba T."/>
            <person name="Matsumura K."/>
            <person name="Nakajima Y."/>
            <person name="Mizuno T."/>
            <person name="Morinaga M."/>
            <person name="Sasaki M."/>
            <person name="Togashi T."/>
            <person name="Oyama M."/>
            <person name="Hata H."/>
            <person name="Watanabe M."/>
            <person name="Komatsu T."/>
            <person name="Mizushima-Sugano J."/>
            <person name="Satoh T."/>
            <person name="Shirai Y."/>
            <person name="Takahashi Y."/>
            <person name="Nakagawa K."/>
            <person name="Okumura K."/>
            <person name="Nagase T."/>
            <person name="Nomura N."/>
            <person name="Kikuchi H."/>
            <person name="Masuho Y."/>
            <person name="Yamashita R."/>
            <person name="Nakai K."/>
            <person name="Yada T."/>
            <person name="Nakamura Y."/>
            <person name="Ohara O."/>
            <person name="Isogai T."/>
            <person name="Sugano S."/>
        </authorList>
    </citation>
    <scope>NUCLEOTIDE SEQUENCE [LARGE SCALE MRNA] (ISOFORM 2)</scope>
</reference>
<reference key="4">
    <citation type="journal article" date="2003" name="Nature">
        <title>The DNA sequence of human chromosome 7.</title>
        <authorList>
            <person name="Hillier L.W."/>
            <person name="Fulton R.S."/>
            <person name="Fulton L.A."/>
            <person name="Graves T.A."/>
            <person name="Pepin K.H."/>
            <person name="Wagner-McPherson C."/>
            <person name="Layman D."/>
            <person name="Maas J."/>
            <person name="Jaeger S."/>
            <person name="Walker R."/>
            <person name="Wylie K."/>
            <person name="Sekhon M."/>
            <person name="Becker M.C."/>
            <person name="O'Laughlin M.D."/>
            <person name="Schaller M.E."/>
            <person name="Fewell G.A."/>
            <person name="Delehaunty K.D."/>
            <person name="Miner T.L."/>
            <person name="Nash W.E."/>
            <person name="Cordes M."/>
            <person name="Du H."/>
            <person name="Sun H."/>
            <person name="Edwards J."/>
            <person name="Bradshaw-Cordum H."/>
            <person name="Ali J."/>
            <person name="Andrews S."/>
            <person name="Isak A."/>
            <person name="Vanbrunt A."/>
            <person name="Nguyen C."/>
            <person name="Du F."/>
            <person name="Lamar B."/>
            <person name="Courtney L."/>
            <person name="Kalicki J."/>
            <person name="Ozersky P."/>
            <person name="Bielicki L."/>
            <person name="Scott K."/>
            <person name="Holmes A."/>
            <person name="Harkins R."/>
            <person name="Harris A."/>
            <person name="Strong C.M."/>
            <person name="Hou S."/>
            <person name="Tomlinson C."/>
            <person name="Dauphin-Kohlberg S."/>
            <person name="Kozlowicz-Reilly A."/>
            <person name="Leonard S."/>
            <person name="Rohlfing T."/>
            <person name="Rock S.M."/>
            <person name="Tin-Wollam A.-M."/>
            <person name="Abbott A."/>
            <person name="Minx P."/>
            <person name="Maupin R."/>
            <person name="Strowmatt C."/>
            <person name="Latreille P."/>
            <person name="Miller N."/>
            <person name="Johnson D."/>
            <person name="Murray J."/>
            <person name="Woessner J.P."/>
            <person name="Wendl M.C."/>
            <person name="Yang S.-P."/>
            <person name="Schultz B.R."/>
            <person name="Wallis J.W."/>
            <person name="Spieth J."/>
            <person name="Bieri T.A."/>
            <person name="Nelson J.O."/>
            <person name="Berkowicz N."/>
            <person name="Wohldmann P.E."/>
            <person name="Cook L.L."/>
            <person name="Hickenbotham M.T."/>
            <person name="Eldred J."/>
            <person name="Williams D."/>
            <person name="Bedell J.A."/>
            <person name="Mardis E.R."/>
            <person name="Clifton S.W."/>
            <person name="Chissoe S.L."/>
            <person name="Marra M.A."/>
            <person name="Raymond C."/>
            <person name="Haugen E."/>
            <person name="Gillett W."/>
            <person name="Zhou Y."/>
            <person name="James R."/>
            <person name="Phelps K."/>
            <person name="Iadanoto S."/>
            <person name="Bubb K."/>
            <person name="Simms E."/>
            <person name="Levy R."/>
            <person name="Clendenning J."/>
            <person name="Kaul R."/>
            <person name="Kent W.J."/>
            <person name="Furey T.S."/>
            <person name="Baertsch R.A."/>
            <person name="Brent M.R."/>
            <person name="Keibler E."/>
            <person name="Flicek P."/>
            <person name="Bork P."/>
            <person name="Suyama M."/>
            <person name="Bailey J.A."/>
            <person name="Portnoy M.E."/>
            <person name="Torrents D."/>
            <person name="Chinwalla A.T."/>
            <person name="Gish W.R."/>
            <person name="Eddy S.R."/>
            <person name="McPherson J.D."/>
            <person name="Olson M.V."/>
            <person name="Eichler E.E."/>
            <person name="Green E.D."/>
            <person name="Waterston R.H."/>
            <person name="Wilson R.K."/>
        </authorList>
    </citation>
    <scope>NUCLEOTIDE SEQUENCE [LARGE SCALE GENOMIC DNA]</scope>
</reference>
<reference key="5">
    <citation type="journal article" date="2004" name="Genome Res.">
        <title>The status, quality, and expansion of the NIH full-length cDNA project: the Mammalian Gene Collection (MGC).</title>
        <authorList>
            <consortium name="The MGC Project Team"/>
        </authorList>
    </citation>
    <scope>NUCLEOTIDE SEQUENCE [LARGE SCALE MRNA] (ISOFORM 1)</scope>
    <source>
        <tissue>Pancreas</tissue>
    </source>
</reference>
<reference key="6">
    <citation type="journal article" date="2003" name="Hum. Genet.">
        <title>The novel imprinted carboxypeptidase A4 gene (CPA4) in the 7q32 imprinting domain.</title>
        <authorList>
            <person name="Kayashima T."/>
            <person name="Yamasaki K."/>
            <person name="Yamada T."/>
            <person name="Sakai H."/>
            <person name="Miwa N."/>
            <person name="Ohta T."/>
            <person name="Yoshiura K."/>
            <person name="Matsumoto N."/>
            <person name="Nakane Y."/>
            <person name="Kanetake H."/>
            <person name="Ishino F."/>
            <person name="Niikawa N."/>
            <person name="Kishino T."/>
        </authorList>
    </citation>
    <scope>IMPRINTING</scope>
</reference>
<reference key="7">
    <citation type="journal article" date="2010" name="J. Biol. Chem.">
        <title>Characterization of the substrate specificity of human carboxypeptidase A4 and implications for a role in extracellular peptide processing.</title>
        <authorList>
            <person name="Tanco S."/>
            <person name="Zhang X."/>
            <person name="Morano C."/>
            <person name="Aviles F.X."/>
            <person name="Lorenzo J."/>
            <person name="Fricker L.D."/>
        </authorList>
    </citation>
    <scope>FUNCTION</scope>
    <scope>CATALYTIC ACTIVITY</scope>
    <scope>BIOPHYSICOCHEMICAL PROPERTIES</scope>
    <scope>SUBCELLULAR LOCATION</scope>
</reference>
<reference evidence="13" key="8">
    <citation type="journal article" date="2005" name="Cell. Mol. Life Sci.">
        <title>Detailed molecular comparison between the inhibition mode of A/B-type carboxypeptidases in the zymogen state and by the endogenous inhibitor latexin.</title>
        <authorList>
            <person name="Garcia-Castellanos R."/>
            <person name="Bonet-Figueredo R."/>
            <person name="Pallares I."/>
            <person name="Ventura S."/>
            <person name="Aviles F.X."/>
            <person name="Vendrell J."/>
            <person name="Gomis-Rueth F.-X."/>
        </authorList>
    </citation>
    <scope>X-RAY CRYSTALLOGRAPHY (2.2 ANGSTROMS) OF 19-421 IN COMPLEX WITH LXN AND ZINC IONS</scope>
    <scope>GLYCOSYLATION AT ASN-260</scope>
    <scope>DISULFIDE BOND</scope>
</reference>
<reference evidence="13" key="9">
    <citation type="journal article" date="2005" name="Proc. Natl. Acad. Sci. U.S.A.">
        <title>Structure of human carboxypeptidase A4 with its endogenous protein inhibitor, latexin.</title>
        <authorList>
            <person name="Pallares I."/>
            <person name="Bonet R."/>
            <person name="Garcia-Castellanos R."/>
            <person name="Ventura S."/>
            <person name="Aviles F.X."/>
            <person name="Vendrell J."/>
            <person name="Gomis-Rueth F.-X."/>
        </authorList>
    </citation>
    <scope>X-RAY CRYSTALLOGRAPHY (1.6 ANGSTROMS) OF 114-421 IN COMPLEX WITH LXN AND ZINC IONS</scope>
    <scope>GLYCOSYLATION AT ASN-260</scope>
    <scope>DISULFIDE BOND</scope>
</reference>
<reference evidence="14" key="10">
    <citation type="journal article" date="2007" name="Biochemistry">
        <title>Caught after the Act: a human A-type metallocarboxypeptidase in a product complex with a cleaved hexapeptide.</title>
        <authorList>
            <person name="Bayes A."/>
            <person name="Fernandez D."/>
            <person name="Sola M."/>
            <person name="Marrero A."/>
            <person name="Garcia-Pique S."/>
            <person name="Aviles F.X."/>
            <person name="Vendrell J."/>
            <person name="Gomis-Ruth F.X."/>
        </authorList>
    </citation>
    <scope>X-RAY CRYSTALLOGRAPHY (1.60 ANGSTROMS) OF 116-420 IN COMPLEX WITH ZINC AND A PEPTIDE</scope>
    <scope>COFACTOR</scope>
    <scope>GLYCOSYLATION AT ASN-260</scope>
</reference>
<reference evidence="15" key="11">
    <citation type="journal article" date="2012" name="J. Biol. Chem.">
        <title>Crystal structure of novel metallocarboxypeptidase inhibitor from marine mollusk Nerita versicolor in complex with human carboxypeptidase A4.</title>
        <authorList>
            <person name="Covaleda G."/>
            <person name="del Rivero M.A."/>
            <person name="Chavez M.A."/>
            <person name="Aviles F.X."/>
            <person name="Reverter D."/>
        </authorList>
    </citation>
    <scope>X-RAY CRYSTALLOGRAPHY (1.7 ANGSTROMS) OF 112-421 IN COMPLEX WITH N.VERSICOLOR MCPI AND ZINC</scope>
    <scope>COFACTOR</scope>
    <scope>ACTIVITY REGULATION</scope>
    <scope>SUBUNIT</scope>
    <scope>DISULFIDE BOND</scope>
</reference>
<reference evidence="16" key="12">
    <citation type="journal article" date="2013" name="Structure">
        <title>A noncanonical mechanism of carboxypeptidase inhibition revealed by the crystal structure of the Tri-Kunitz SmCI in complex with human CPA4.</title>
        <authorList>
            <person name="Alonso del Rivero M."/>
            <person name="Reytor M.L."/>
            <person name="Trejo S.A."/>
            <person name="Chavez M.A."/>
            <person name="Aviles F.X."/>
            <person name="Reverter D."/>
        </authorList>
    </citation>
    <scope>X-RAY CRYSTALLOGRAPHY (2.20 ANGSTROMS) OF 112-421 IN COMPLEX WITH S.MAGNIFICA CARBOXYPEPTIDASE INHIBITOR SMCI AND ZINC</scope>
    <scope>COFACTOR</scope>
    <scope>ACTIVITY REGULATION</scope>
</reference>
<sequence length="421" mass="47351">MRWILFIGALIGSSICGQEKFFGDQVLRINVRNGDEISKLSQLVNSNNLKLNFWKSPSSFNRPVDVLVPSVSLQAFKSFLRSQGLEYAVTIEDLQALLDNEDDEMQHNEGQERSSNNFNYGAYHSLEAIYHEMDNIAADFPDLARRVKIGHSFENRPMYVLKFSTGKGVRRPAVWLNAGIHSREWISQATAIWTARKIVSDYQRDPAITSILEKMDIFLLPVANPDGYVYTQTQNRLWRKTRSRNPGSSCIGADPNRNWNASFAGKGASDNPCSEVYHGPHANSEVEVKSVVDFIQKHGNFKGFIDLHSYSQLLMYPYGYSVKKAPDAEELDKVARLAAKALASVSGTEYQVGPTCTTVYPASGSSIDWAYDNGIKFAFTFELRDTGTYGFLLPANQIIPTAEETWLGLKTIMEHVRDNLY</sequence>